<comment type="function">
    <text evidence="1">Activates the cell division inhibited by chromosomal DNA over-replication.</text>
</comment>
<comment type="similarity">
    <text evidence="1">Belongs to the CedA family.</text>
</comment>
<protein>
    <recommendedName>
        <fullName evidence="1">Cell division activator CedA</fullName>
    </recommendedName>
</protein>
<sequence length="80" mass="9372">MMKPLRQQNRQIISYIPRVEPAPPEHAIKMDTFRDVWILRGKYVAFVLTGESFQRSPAFSVPESAQRWANQVRQENEIAD</sequence>
<dbReference type="EMBL" id="FM200053">
    <property type="protein sequence ID" value="CAR59595.1"/>
    <property type="molecule type" value="Genomic_DNA"/>
</dbReference>
<dbReference type="RefSeq" id="WP_000977510.1">
    <property type="nucleotide sequence ID" value="NC_011147.1"/>
</dbReference>
<dbReference type="SMR" id="B5BA56"/>
<dbReference type="KEGG" id="sek:SSPA1416"/>
<dbReference type="HOGENOM" id="CLU_167445_0_0_6"/>
<dbReference type="Proteomes" id="UP000001869">
    <property type="component" value="Chromosome"/>
</dbReference>
<dbReference type="GO" id="GO:0003677">
    <property type="term" value="F:DNA binding"/>
    <property type="evidence" value="ECO:0007669"/>
    <property type="project" value="UniProtKB-UniRule"/>
</dbReference>
<dbReference type="GO" id="GO:0051301">
    <property type="term" value="P:cell division"/>
    <property type="evidence" value="ECO:0007669"/>
    <property type="project" value="UniProtKB-UniRule"/>
</dbReference>
<dbReference type="Gene3D" id="3.30.730.20">
    <property type="entry name" value="Cell division activator CedA"/>
    <property type="match status" value="1"/>
</dbReference>
<dbReference type="HAMAP" id="MF_01580">
    <property type="entry name" value="CedA"/>
    <property type="match status" value="1"/>
</dbReference>
<dbReference type="InterPro" id="IPR038463">
    <property type="entry name" value="CedA-like_sf"/>
</dbReference>
<dbReference type="InterPro" id="IPR019666">
    <property type="entry name" value="Cell_div_activator_CedA"/>
</dbReference>
<dbReference type="NCBIfam" id="NF007510">
    <property type="entry name" value="PRK10113.1"/>
    <property type="match status" value="1"/>
</dbReference>
<dbReference type="Pfam" id="PF10729">
    <property type="entry name" value="CedA"/>
    <property type="match status" value="1"/>
</dbReference>
<name>CEDA_SALPK</name>
<accession>B5BA56</accession>
<reference key="1">
    <citation type="journal article" date="2009" name="BMC Genomics">
        <title>Pseudogene accumulation in the evolutionary histories of Salmonella enterica serovars Paratyphi A and Typhi.</title>
        <authorList>
            <person name="Holt K.E."/>
            <person name="Thomson N.R."/>
            <person name="Wain J."/>
            <person name="Langridge G.C."/>
            <person name="Hasan R."/>
            <person name="Bhutta Z.A."/>
            <person name="Quail M.A."/>
            <person name="Norbertczak H."/>
            <person name="Walker D."/>
            <person name="Simmonds M."/>
            <person name="White B."/>
            <person name="Bason N."/>
            <person name="Mungall K."/>
            <person name="Dougan G."/>
            <person name="Parkhill J."/>
        </authorList>
    </citation>
    <scope>NUCLEOTIDE SEQUENCE [LARGE SCALE GENOMIC DNA]</scope>
    <source>
        <strain>AKU_12601</strain>
    </source>
</reference>
<feature type="chain" id="PRO_1000200995" description="Cell division activator CedA">
    <location>
        <begin position="1"/>
        <end position="80"/>
    </location>
</feature>
<keyword id="KW-0131">Cell cycle</keyword>
<keyword id="KW-0132">Cell division</keyword>
<keyword id="KW-0238">DNA-binding</keyword>
<evidence type="ECO:0000255" key="1">
    <source>
        <dbReference type="HAMAP-Rule" id="MF_01580"/>
    </source>
</evidence>
<organism>
    <name type="scientific">Salmonella paratyphi A (strain AKU_12601)</name>
    <dbReference type="NCBI Taxonomy" id="554290"/>
    <lineage>
        <taxon>Bacteria</taxon>
        <taxon>Pseudomonadati</taxon>
        <taxon>Pseudomonadota</taxon>
        <taxon>Gammaproteobacteria</taxon>
        <taxon>Enterobacterales</taxon>
        <taxon>Enterobacteriaceae</taxon>
        <taxon>Salmonella</taxon>
    </lineage>
</organism>
<proteinExistence type="inferred from homology"/>
<gene>
    <name evidence="1" type="primary">cedA</name>
    <name type="ordered locus">SSPA1416</name>
</gene>